<organism>
    <name type="scientific">Yersinia pseudotuberculosis serotype I (strain IP32953)</name>
    <dbReference type="NCBI Taxonomy" id="273123"/>
    <lineage>
        <taxon>Bacteria</taxon>
        <taxon>Pseudomonadati</taxon>
        <taxon>Pseudomonadota</taxon>
        <taxon>Gammaproteobacteria</taxon>
        <taxon>Enterobacterales</taxon>
        <taxon>Yersiniaceae</taxon>
        <taxon>Yersinia</taxon>
    </lineage>
</organism>
<dbReference type="EMBL" id="BX936398">
    <property type="protein sequence ID" value="CAH20063.1"/>
    <property type="molecule type" value="Genomic_DNA"/>
</dbReference>
<dbReference type="RefSeq" id="WP_011191806.1">
    <property type="nucleotide sequence ID" value="NC_006155.1"/>
</dbReference>
<dbReference type="SMR" id="Q66E70"/>
<dbReference type="GeneID" id="49787170"/>
<dbReference type="KEGG" id="ypo:BZ17_1733"/>
<dbReference type="KEGG" id="yps:YPTB0823"/>
<dbReference type="PATRIC" id="fig|273123.14.peg.1834"/>
<dbReference type="Proteomes" id="UP000001011">
    <property type="component" value="Chromosome"/>
</dbReference>
<dbReference type="GO" id="GO:0005829">
    <property type="term" value="C:cytosol"/>
    <property type="evidence" value="ECO:0007669"/>
    <property type="project" value="TreeGrafter"/>
</dbReference>
<dbReference type="GO" id="GO:0005524">
    <property type="term" value="F:ATP binding"/>
    <property type="evidence" value="ECO:0007669"/>
    <property type="project" value="UniProtKB-UniRule"/>
</dbReference>
<dbReference type="GO" id="GO:0016887">
    <property type="term" value="F:ATP hydrolysis activity"/>
    <property type="evidence" value="ECO:0007669"/>
    <property type="project" value="InterPro"/>
</dbReference>
<dbReference type="GO" id="GO:0140664">
    <property type="term" value="F:ATP-dependent DNA damage sensor activity"/>
    <property type="evidence" value="ECO:0007669"/>
    <property type="project" value="InterPro"/>
</dbReference>
<dbReference type="GO" id="GO:0003684">
    <property type="term" value="F:damaged DNA binding"/>
    <property type="evidence" value="ECO:0007669"/>
    <property type="project" value="UniProtKB-UniRule"/>
</dbReference>
<dbReference type="GO" id="GO:0003697">
    <property type="term" value="F:single-stranded DNA binding"/>
    <property type="evidence" value="ECO:0007669"/>
    <property type="project" value="UniProtKB-UniRule"/>
</dbReference>
<dbReference type="GO" id="GO:0006310">
    <property type="term" value="P:DNA recombination"/>
    <property type="evidence" value="ECO:0007669"/>
    <property type="project" value="UniProtKB-UniRule"/>
</dbReference>
<dbReference type="GO" id="GO:0006281">
    <property type="term" value="P:DNA repair"/>
    <property type="evidence" value="ECO:0007669"/>
    <property type="project" value="UniProtKB-UniRule"/>
</dbReference>
<dbReference type="GO" id="GO:0009432">
    <property type="term" value="P:SOS response"/>
    <property type="evidence" value="ECO:0007669"/>
    <property type="project" value="UniProtKB-UniRule"/>
</dbReference>
<dbReference type="CDD" id="cd00983">
    <property type="entry name" value="RecA"/>
    <property type="match status" value="1"/>
</dbReference>
<dbReference type="FunFam" id="3.40.50.300:FF:000087">
    <property type="entry name" value="Recombinase RecA"/>
    <property type="match status" value="1"/>
</dbReference>
<dbReference type="Gene3D" id="3.40.50.300">
    <property type="entry name" value="P-loop containing nucleotide triphosphate hydrolases"/>
    <property type="match status" value="1"/>
</dbReference>
<dbReference type="HAMAP" id="MF_00268">
    <property type="entry name" value="RecA"/>
    <property type="match status" value="1"/>
</dbReference>
<dbReference type="InterPro" id="IPR003593">
    <property type="entry name" value="AAA+_ATPase"/>
</dbReference>
<dbReference type="InterPro" id="IPR013765">
    <property type="entry name" value="DNA_recomb/repair_RecA"/>
</dbReference>
<dbReference type="InterPro" id="IPR020584">
    <property type="entry name" value="DNA_recomb/repair_RecA_CS"/>
</dbReference>
<dbReference type="InterPro" id="IPR027417">
    <property type="entry name" value="P-loop_NTPase"/>
</dbReference>
<dbReference type="InterPro" id="IPR049261">
    <property type="entry name" value="RecA-like_C"/>
</dbReference>
<dbReference type="InterPro" id="IPR049428">
    <property type="entry name" value="RecA-like_N"/>
</dbReference>
<dbReference type="InterPro" id="IPR020588">
    <property type="entry name" value="RecA_ATP-bd"/>
</dbReference>
<dbReference type="InterPro" id="IPR023400">
    <property type="entry name" value="RecA_C_sf"/>
</dbReference>
<dbReference type="InterPro" id="IPR020587">
    <property type="entry name" value="RecA_monomer-monomer_interface"/>
</dbReference>
<dbReference type="NCBIfam" id="TIGR02012">
    <property type="entry name" value="tigrfam_recA"/>
    <property type="match status" value="1"/>
</dbReference>
<dbReference type="PANTHER" id="PTHR45900:SF1">
    <property type="entry name" value="MITOCHONDRIAL DNA REPAIR PROTEIN RECA HOMOLOG-RELATED"/>
    <property type="match status" value="1"/>
</dbReference>
<dbReference type="PANTHER" id="PTHR45900">
    <property type="entry name" value="RECA"/>
    <property type="match status" value="1"/>
</dbReference>
<dbReference type="Pfam" id="PF00154">
    <property type="entry name" value="RecA"/>
    <property type="match status" value="1"/>
</dbReference>
<dbReference type="Pfam" id="PF21096">
    <property type="entry name" value="RecA_C"/>
    <property type="match status" value="1"/>
</dbReference>
<dbReference type="PRINTS" id="PR00142">
    <property type="entry name" value="RECA"/>
</dbReference>
<dbReference type="SMART" id="SM00382">
    <property type="entry name" value="AAA"/>
    <property type="match status" value="1"/>
</dbReference>
<dbReference type="SUPFAM" id="SSF52540">
    <property type="entry name" value="P-loop containing nucleoside triphosphate hydrolases"/>
    <property type="match status" value="1"/>
</dbReference>
<dbReference type="SUPFAM" id="SSF54752">
    <property type="entry name" value="RecA protein, C-terminal domain"/>
    <property type="match status" value="1"/>
</dbReference>
<dbReference type="PROSITE" id="PS00321">
    <property type="entry name" value="RECA_1"/>
    <property type="match status" value="1"/>
</dbReference>
<dbReference type="PROSITE" id="PS50162">
    <property type="entry name" value="RECA_2"/>
    <property type="match status" value="1"/>
</dbReference>
<dbReference type="PROSITE" id="PS50163">
    <property type="entry name" value="RECA_3"/>
    <property type="match status" value="1"/>
</dbReference>
<reference key="1">
    <citation type="journal article" date="2004" name="Proc. Natl. Acad. Sci. U.S.A.">
        <title>Insights into the evolution of Yersinia pestis through whole-genome comparison with Yersinia pseudotuberculosis.</title>
        <authorList>
            <person name="Chain P.S.G."/>
            <person name="Carniel E."/>
            <person name="Larimer F.W."/>
            <person name="Lamerdin J."/>
            <person name="Stoutland P.O."/>
            <person name="Regala W.M."/>
            <person name="Georgescu A.M."/>
            <person name="Vergez L.M."/>
            <person name="Land M.L."/>
            <person name="Motin V.L."/>
            <person name="Brubaker R.R."/>
            <person name="Fowler J."/>
            <person name="Hinnebusch J."/>
            <person name="Marceau M."/>
            <person name="Medigue C."/>
            <person name="Simonet M."/>
            <person name="Chenal-Francisque V."/>
            <person name="Souza B."/>
            <person name="Dacheux D."/>
            <person name="Elliott J.M."/>
            <person name="Derbise A."/>
            <person name="Hauser L.J."/>
            <person name="Garcia E."/>
        </authorList>
    </citation>
    <scope>NUCLEOTIDE SEQUENCE [LARGE SCALE GENOMIC DNA]</scope>
    <source>
        <strain>IP32953</strain>
    </source>
</reference>
<keyword id="KW-0067">ATP-binding</keyword>
<keyword id="KW-0963">Cytoplasm</keyword>
<keyword id="KW-0227">DNA damage</keyword>
<keyword id="KW-0233">DNA recombination</keyword>
<keyword id="KW-0234">DNA repair</keyword>
<keyword id="KW-0238">DNA-binding</keyword>
<keyword id="KW-0547">Nucleotide-binding</keyword>
<keyword id="KW-0742">SOS response</keyword>
<comment type="function">
    <text evidence="1">Can catalyze the hydrolysis of ATP in the presence of single-stranded DNA, the ATP-dependent uptake of single-stranded DNA by duplex DNA, and the ATP-dependent hybridization of homologous single-stranded DNAs. It interacts with LexA causing its activation and leading to its autocatalytic cleavage.</text>
</comment>
<comment type="subcellular location">
    <subcellularLocation>
        <location evidence="1">Cytoplasm</location>
    </subcellularLocation>
</comment>
<comment type="similarity">
    <text evidence="1">Belongs to the RecA family.</text>
</comment>
<proteinExistence type="inferred from homology"/>
<protein>
    <recommendedName>
        <fullName evidence="1">Protein RecA</fullName>
    </recommendedName>
    <alternativeName>
        <fullName evidence="1">Recombinase A</fullName>
    </alternativeName>
</protein>
<name>RECA_YERPS</name>
<accession>Q66E70</accession>
<evidence type="ECO:0000255" key="1">
    <source>
        <dbReference type="HAMAP-Rule" id="MF_00268"/>
    </source>
</evidence>
<gene>
    <name evidence="1" type="primary">recA</name>
    <name type="ordered locus">YPTB0823</name>
</gene>
<sequence>MAIDENKQKALAAALGQIEKQFGKGSIMRLGEDRSMDVETISTGSLSLDIALGAGGLPMGRIVEIYGPESSGKTTLTLQVIAAAQREGKTCAFIDAEHALDPIYAKKLGVDIDNLLCSQPDTGEQALEICDALTRSGAVDVIIVDSVAALTPKAEIEGEIGDSHMGLAARMMSQAMRKLAGNLKNANTLLIFINQIRMKIGVMFGNPETTTGGNALKFYASVRLDIRRIGAVKDGDVVVGSETRVKVVKNKIAAPFKQAEFQILYGEGININGELVDLGVKHKLIEKAGAWYSYNGDKIGQGKANASNYLKENPAIAAELDKKLREMLLNGGNGEQPVAAATAEFADGVDETNEEF</sequence>
<feature type="chain" id="PRO_0000122911" description="Protein RecA">
    <location>
        <begin position="1"/>
        <end position="356"/>
    </location>
</feature>
<feature type="binding site" evidence="1">
    <location>
        <begin position="67"/>
        <end position="74"/>
    </location>
    <ligand>
        <name>ATP</name>
        <dbReference type="ChEBI" id="CHEBI:30616"/>
    </ligand>
</feature>